<protein>
    <recommendedName>
        <fullName evidence="1">Small ribosomal subunit protein bS20</fullName>
    </recommendedName>
    <alternativeName>
        <fullName evidence="2">30S ribosomal protein S20</fullName>
    </alternativeName>
</protein>
<comment type="function">
    <text evidence="1">Binds directly to 16S ribosomal RNA.</text>
</comment>
<comment type="similarity">
    <text evidence="1">Belongs to the bacterial ribosomal protein bS20 family.</text>
</comment>
<feature type="chain" id="PRO_1000014574" description="Small ribosomal subunit protein bS20">
    <location>
        <begin position="1"/>
        <end position="88"/>
    </location>
</feature>
<evidence type="ECO:0000255" key="1">
    <source>
        <dbReference type="HAMAP-Rule" id="MF_00500"/>
    </source>
</evidence>
<evidence type="ECO:0000305" key="2"/>
<name>RS20_CLOBL</name>
<reference key="1">
    <citation type="submission" date="2007-06" db="EMBL/GenBank/DDBJ databases">
        <authorList>
            <person name="Brinkac L.M."/>
            <person name="Daugherty S."/>
            <person name="Dodson R.J."/>
            <person name="Madupu R."/>
            <person name="Brown J.L."/>
            <person name="Bruce D."/>
            <person name="Detter C."/>
            <person name="Munk C."/>
            <person name="Smith L.A."/>
            <person name="Smith T.J."/>
            <person name="White O."/>
            <person name="Brettin T.S."/>
        </authorList>
    </citation>
    <scope>NUCLEOTIDE SEQUENCE [LARGE SCALE GENOMIC DNA]</scope>
    <source>
        <strain>Langeland / NCTC 10281 / Type F</strain>
    </source>
</reference>
<proteinExistence type="inferred from homology"/>
<gene>
    <name evidence="1" type="primary">rpsT</name>
    <name type="ordered locus">CLI_3020</name>
</gene>
<keyword id="KW-0687">Ribonucleoprotein</keyword>
<keyword id="KW-0689">Ribosomal protein</keyword>
<keyword id="KW-0694">RNA-binding</keyword>
<keyword id="KW-0699">rRNA-binding</keyword>
<accession>A7GHI4</accession>
<sequence length="88" mass="9655">MANIKSAKKRIKVIETKTLRNKMLKSSLKTTIKNFLTVVEGKNVEEAKAAYKTAARALDMSVSKGIVHKNKAARTKSRLAAKLNALNA</sequence>
<dbReference type="EMBL" id="CP000728">
    <property type="protein sequence ID" value="ABS41124.1"/>
    <property type="molecule type" value="Genomic_DNA"/>
</dbReference>
<dbReference type="RefSeq" id="WP_003358111.1">
    <property type="nucleotide sequence ID" value="NC_009699.1"/>
</dbReference>
<dbReference type="SMR" id="A7GHI4"/>
<dbReference type="GeneID" id="5187653"/>
<dbReference type="KEGG" id="cbf:CLI_3020"/>
<dbReference type="HOGENOM" id="CLU_160655_0_0_9"/>
<dbReference type="Proteomes" id="UP000002410">
    <property type="component" value="Chromosome"/>
</dbReference>
<dbReference type="GO" id="GO:0005829">
    <property type="term" value="C:cytosol"/>
    <property type="evidence" value="ECO:0007669"/>
    <property type="project" value="TreeGrafter"/>
</dbReference>
<dbReference type="GO" id="GO:0015935">
    <property type="term" value="C:small ribosomal subunit"/>
    <property type="evidence" value="ECO:0007669"/>
    <property type="project" value="TreeGrafter"/>
</dbReference>
<dbReference type="GO" id="GO:0070181">
    <property type="term" value="F:small ribosomal subunit rRNA binding"/>
    <property type="evidence" value="ECO:0007669"/>
    <property type="project" value="TreeGrafter"/>
</dbReference>
<dbReference type="GO" id="GO:0003735">
    <property type="term" value="F:structural constituent of ribosome"/>
    <property type="evidence" value="ECO:0007669"/>
    <property type="project" value="InterPro"/>
</dbReference>
<dbReference type="GO" id="GO:0006412">
    <property type="term" value="P:translation"/>
    <property type="evidence" value="ECO:0007669"/>
    <property type="project" value="UniProtKB-UniRule"/>
</dbReference>
<dbReference type="FunFam" id="1.20.58.110:FF:000001">
    <property type="entry name" value="30S ribosomal protein S20"/>
    <property type="match status" value="1"/>
</dbReference>
<dbReference type="Gene3D" id="1.20.58.110">
    <property type="entry name" value="Ribosomal protein S20"/>
    <property type="match status" value="1"/>
</dbReference>
<dbReference type="HAMAP" id="MF_00500">
    <property type="entry name" value="Ribosomal_bS20"/>
    <property type="match status" value="1"/>
</dbReference>
<dbReference type="InterPro" id="IPR002583">
    <property type="entry name" value="Ribosomal_bS20"/>
</dbReference>
<dbReference type="InterPro" id="IPR036510">
    <property type="entry name" value="Ribosomal_bS20_sf"/>
</dbReference>
<dbReference type="NCBIfam" id="TIGR00029">
    <property type="entry name" value="S20"/>
    <property type="match status" value="1"/>
</dbReference>
<dbReference type="PANTHER" id="PTHR33398">
    <property type="entry name" value="30S RIBOSOMAL PROTEIN S20"/>
    <property type="match status" value="1"/>
</dbReference>
<dbReference type="PANTHER" id="PTHR33398:SF1">
    <property type="entry name" value="SMALL RIBOSOMAL SUBUNIT PROTEIN BS20C"/>
    <property type="match status" value="1"/>
</dbReference>
<dbReference type="Pfam" id="PF01649">
    <property type="entry name" value="Ribosomal_S20p"/>
    <property type="match status" value="1"/>
</dbReference>
<dbReference type="SUPFAM" id="SSF46992">
    <property type="entry name" value="Ribosomal protein S20"/>
    <property type="match status" value="1"/>
</dbReference>
<organism>
    <name type="scientific">Clostridium botulinum (strain Langeland / NCTC 10281 / Type F)</name>
    <dbReference type="NCBI Taxonomy" id="441772"/>
    <lineage>
        <taxon>Bacteria</taxon>
        <taxon>Bacillati</taxon>
        <taxon>Bacillota</taxon>
        <taxon>Clostridia</taxon>
        <taxon>Eubacteriales</taxon>
        <taxon>Clostridiaceae</taxon>
        <taxon>Clostridium</taxon>
    </lineage>
</organism>